<proteinExistence type="inferred from homology"/>
<protein>
    <recommendedName>
        <fullName evidence="1">Large ribosomal subunit protein bL28</fullName>
    </recommendedName>
    <alternativeName>
        <fullName evidence="2">50S ribosomal protein L28</fullName>
    </alternativeName>
</protein>
<comment type="similarity">
    <text evidence="1">Belongs to the bacterial ribosomal protein bL28 family.</text>
</comment>
<reference key="1">
    <citation type="journal article" date="2007" name="J. Bacteriol.">
        <title>Genome sequence of Avery's virulent serotype 2 strain D39 of Streptococcus pneumoniae and comparison with that of unencapsulated laboratory strain R6.</title>
        <authorList>
            <person name="Lanie J.A."/>
            <person name="Ng W.-L."/>
            <person name="Kazmierczak K.M."/>
            <person name="Andrzejewski T.M."/>
            <person name="Davidsen T.M."/>
            <person name="Wayne K.J."/>
            <person name="Tettelin H."/>
            <person name="Glass J.I."/>
            <person name="Winkler M.E."/>
        </authorList>
    </citation>
    <scope>NUCLEOTIDE SEQUENCE [LARGE SCALE GENOMIC DNA]</scope>
    <source>
        <strain>D39 / NCTC 7466</strain>
    </source>
</reference>
<organism>
    <name type="scientific">Streptococcus pneumoniae serotype 2 (strain D39 / NCTC 7466)</name>
    <dbReference type="NCBI Taxonomy" id="373153"/>
    <lineage>
        <taxon>Bacteria</taxon>
        <taxon>Bacillati</taxon>
        <taxon>Bacillota</taxon>
        <taxon>Bacilli</taxon>
        <taxon>Lactobacillales</taxon>
        <taxon>Streptococcaceae</taxon>
        <taxon>Streptococcus</taxon>
    </lineage>
</organism>
<dbReference type="EMBL" id="CP000410">
    <property type="protein sequence ID" value="ABJ54143.1"/>
    <property type="molecule type" value="Genomic_DNA"/>
</dbReference>
<dbReference type="RefSeq" id="WP_001140948.1">
    <property type="nucleotide sequence ID" value="NZ_JAMLJR010000009.1"/>
</dbReference>
<dbReference type="SMR" id="Q04M37"/>
<dbReference type="PaxDb" id="373153-SPD_0401"/>
<dbReference type="GeneID" id="93921138"/>
<dbReference type="KEGG" id="spd:SPD_0401"/>
<dbReference type="eggNOG" id="COG0227">
    <property type="taxonomic scope" value="Bacteria"/>
</dbReference>
<dbReference type="HOGENOM" id="CLU_064548_7_1_9"/>
<dbReference type="BioCyc" id="SPNE373153:G1G6V-440-MONOMER"/>
<dbReference type="Proteomes" id="UP000001452">
    <property type="component" value="Chromosome"/>
</dbReference>
<dbReference type="GO" id="GO:1990904">
    <property type="term" value="C:ribonucleoprotein complex"/>
    <property type="evidence" value="ECO:0007669"/>
    <property type="project" value="UniProtKB-KW"/>
</dbReference>
<dbReference type="GO" id="GO:0005840">
    <property type="term" value="C:ribosome"/>
    <property type="evidence" value="ECO:0007669"/>
    <property type="project" value="UniProtKB-KW"/>
</dbReference>
<dbReference type="GO" id="GO:0003735">
    <property type="term" value="F:structural constituent of ribosome"/>
    <property type="evidence" value="ECO:0007669"/>
    <property type="project" value="InterPro"/>
</dbReference>
<dbReference type="GO" id="GO:0006412">
    <property type="term" value="P:translation"/>
    <property type="evidence" value="ECO:0007669"/>
    <property type="project" value="UniProtKB-UniRule"/>
</dbReference>
<dbReference type="Gene3D" id="2.30.170.40">
    <property type="entry name" value="Ribosomal protein L28/L24"/>
    <property type="match status" value="1"/>
</dbReference>
<dbReference type="HAMAP" id="MF_00373">
    <property type="entry name" value="Ribosomal_bL28"/>
    <property type="match status" value="1"/>
</dbReference>
<dbReference type="InterPro" id="IPR050096">
    <property type="entry name" value="Bacterial_rp_bL28"/>
</dbReference>
<dbReference type="InterPro" id="IPR026569">
    <property type="entry name" value="Ribosomal_bL28"/>
</dbReference>
<dbReference type="InterPro" id="IPR034704">
    <property type="entry name" value="Ribosomal_bL28/bL31-like_sf"/>
</dbReference>
<dbReference type="InterPro" id="IPR001383">
    <property type="entry name" value="Ribosomal_bL28_bact-type"/>
</dbReference>
<dbReference type="InterPro" id="IPR037147">
    <property type="entry name" value="Ribosomal_bL28_sf"/>
</dbReference>
<dbReference type="NCBIfam" id="TIGR00009">
    <property type="entry name" value="L28"/>
    <property type="match status" value="1"/>
</dbReference>
<dbReference type="PANTHER" id="PTHR39080">
    <property type="entry name" value="50S RIBOSOMAL PROTEIN L28"/>
    <property type="match status" value="1"/>
</dbReference>
<dbReference type="PANTHER" id="PTHR39080:SF1">
    <property type="entry name" value="LARGE RIBOSOMAL SUBUNIT PROTEIN BL28A"/>
    <property type="match status" value="1"/>
</dbReference>
<dbReference type="Pfam" id="PF00830">
    <property type="entry name" value="Ribosomal_L28"/>
    <property type="match status" value="1"/>
</dbReference>
<dbReference type="SUPFAM" id="SSF143800">
    <property type="entry name" value="L28p-like"/>
    <property type="match status" value="1"/>
</dbReference>
<gene>
    <name evidence="1" type="primary">rpmB</name>
    <name type="ordered locus">SPD_0401</name>
</gene>
<sequence length="62" mass="6884">MAKVCYFTGRKTVSGNNRSHAMNQTKRAVKPNLQKVTVLIDGKPKKVWASARALKSGKVERV</sequence>
<feature type="chain" id="PRO_1000007369" description="Large ribosomal subunit protein bL28">
    <location>
        <begin position="1"/>
        <end position="62"/>
    </location>
</feature>
<accession>Q04M37</accession>
<keyword id="KW-1185">Reference proteome</keyword>
<keyword id="KW-0687">Ribonucleoprotein</keyword>
<keyword id="KW-0689">Ribosomal protein</keyword>
<evidence type="ECO:0000255" key="1">
    <source>
        <dbReference type="HAMAP-Rule" id="MF_00373"/>
    </source>
</evidence>
<evidence type="ECO:0000305" key="2"/>
<name>RL28_STRP2</name>